<evidence type="ECO:0000255" key="1">
    <source>
        <dbReference type="HAMAP-Rule" id="MF_00046"/>
    </source>
</evidence>
<name>MURC_CLOK5</name>
<dbReference type="EC" id="6.3.2.8" evidence="1"/>
<dbReference type="EMBL" id="CP000673">
    <property type="protein sequence ID" value="EDK32213.1"/>
    <property type="molecule type" value="Genomic_DNA"/>
</dbReference>
<dbReference type="RefSeq" id="WP_011988739.1">
    <property type="nucleotide sequence ID" value="NC_009706.1"/>
</dbReference>
<dbReference type="SMR" id="A5N4I2"/>
<dbReference type="STRING" id="431943.CKL_0143"/>
<dbReference type="KEGG" id="ckl:CKL_0143"/>
<dbReference type="eggNOG" id="COG0773">
    <property type="taxonomic scope" value="Bacteria"/>
</dbReference>
<dbReference type="HOGENOM" id="CLU_028104_1_0_9"/>
<dbReference type="UniPathway" id="UPA00219"/>
<dbReference type="Proteomes" id="UP000002411">
    <property type="component" value="Chromosome"/>
</dbReference>
<dbReference type="GO" id="GO:0005737">
    <property type="term" value="C:cytoplasm"/>
    <property type="evidence" value="ECO:0007669"/>
    <property type="project" value="UniProtKB-SubCell"/>
</dbReference>
<dbReference type="GO" id="GO:0005524">
    <property type="term" value="F:ATP binding"/>
    <property type="evidence" value="ECO:0007669"/>
    <property type="project" value="UniProtKB-UniRule"/>
</dbReference>
<dbReference type="GO" id="GO:0008763">
    <property type="term" value="F:UDP-N-acetylmuramate-L-alanine ligase activity"/>
    <property type="evidence" value="ECO:0007669"/>
    <property type="project" value="UniProtKB-UniRule"/>
</dbReference>
<dbReference type="GO" id="GO:0051301">
    <property type="term" value="P:cell division"/>
    <property type="evidence" value="ECO:0007669"/>
    <property type="project" value="UniProtKB-KW"/>
</dbReference>
<dbReference type="GO" id="GO:0071555">
    <property type="term" value="P:cell wall organization"/>
    <property type="evidence" value="ECO:0007669"/>
    <property type="project" value="UniProtKB-KW"/>
</dbReference>
<dbReference type="GO" id="GO:0009252">
    <property type="term" value="P:peptidoglycan biosynthetic process"/>
    <property type="evidence" value="ECO:0007669"/>
    <property type="project" value="UniProtKB-UniRule"/>
</dbReference>
<dbReference type="GO" id="GO:0008360">
    <property type="term" value="P:regulation of cell shape"/>
    <property type="evidence" value="ECO:0007669"/>
    <property type="project" value="UniProtKB-KW"/>
</dbReference>
<dbReference type="Gene3D" id="3.90.190.20">
    <property type="entry name" value="Mur ligase, C-terminal domain"/>
    <property type="match status" value="1"/>
</dbReference>
<dbReference type="Gene3D" id="3.40.1190.10">
    <property type="entry name" value="Mur-like, catalytic domain"/>
    <property type="match status" value="1"/>
</dbReference>
<dbReference type="Gene3D" id="3.40.50.720">
    <property type="entry name" value="NAD(P)-binding Rossmann-like Domain"/>
    <property type="match status" value="1"/>
</dbReference>
<dbReference type="HAMAP" id="MF_00046">
    <property type="entry name" value="MurC"/>
    <property type="match status" value="1"/>
</dbReference>
<dbReference type="InterPro" id="IPR036565">
    <property type="entry name" value="Mur-like_cat_sf"/>
</dbReference>
<dbReference type="InterPro" id="IPR004101">
    <property type="entry name" value="Mur_ligase_C"/>
</dbReference>
<dbReference type="InterPro" id="IPR036615">
    <property type="entry name" value="Mur_ligase_C_dom_sf"/>
</dbReference>
<dbReference type="InterPro" id="IPR013221">
    <property type="entry name" value="Mur_ligase_cen"/>
</dbReference>
<dbReference type="InterPro" id="IPR000713">
    <property type="entry name" value="Mur_ligase_N"/>
</dbReference>
<dbReference type="InterPro" id="IPR050061">
    <property type="entry name" value="MurCDEF_pg_biosynth"/>
</dbReference>
<dbReference type="InterPro" id="IPR005758">
    <property type="entry name" value="UDP-N-AcMur_Ala_ligase_MurC"/>
</dbReference>
<dbReference type="NCBIfam" id="TIGR01082">
    <property type="entry name" value="murC"/>
    <property type="match status" value="1"/>
</dbReference>
<dbReference type="PANTHER" id="PTHR43445:SF3">
    <property type="entry name" value="UDP-N-ACETYLMURAMATE--L-ALANINE LIGASE"/>
    <property type="match status" value="1"/>
</dbReference>
<dbReference type="PANTHER" id="PTHR43445">
    <property type="entry name" value="UDP-N-ACETYLMURAMATE--L-ALANINE LIGASE-RELATED"/>
    <property type="match status" value="1"/>
</dbReference>
<dbReference type="Pfam" id="PF01225">
    <property type="entry name" value="Mur_ligase"/>
    <property type="match status" value="1"/>
</dbReference>
<dbReference type="Pfam" id="PF02875">
    <property type="entry name" value="Mur_ligase_C"/>
    <property type="match status" value="1"/>
</dbReference>
<dbReference type="Pfam" id="PF08245">
    <property type="entry name" value="Mur_ligase_M"/>
    <property type="match status" value="1"/>
</dbReference>
<dbReference type="SUPFAM" id="SSF51984">
    <property type="entry name" value="MurCD N-terminal domain"/>
    <property type="match status" value="1"/>
</dbReference>
<dbReference type="SUPFAM" id="SSF53623">
    <property type="entry name" value="MurD-like peptide ligases, catalytic domain"/>
    <property type="match status" value="1"/>
</dbReference>
<dbReference type="SUPFAM" id="SSF53244">
    <property type="entry name" value="MurD-like peptide ligases, peptide-binding domain"/>
    <property type="match status" value="1"/>
</dbReference>
<organism>
    <name type="scientific">Clostridium kluyveri (strain ATCC 8527 / DSM 555 / NBRC 12016 / NCIMB 10680 / K1)</name>
    <dbReference type="NCBI Taxonomy" id="431943"/>
    <lineage>
        <taxon>Bacteria</taxon>
        <taxon>Bacillati</taxon>
        <taxon>Bacillota</taxon>
        <taxon>Clostridia</taxon>
        <taxon>Eubacteriales</taxon>
        <taxon>Clostridiaceae</taxon>
        <taxon>Clostridium</taxon>
    </lineage>
</organism>
<proteinExistence type="inferred from homology"/>
<comment type="function">
    <text evidence="1">Cell wall formation.</text>
</comment>
<comment type="catalytic activity">
    <reaction evidence="1">
        <text>UDP-N-acetyl-alpha-D-muramate + L-alanine + ATP = UDP-N-acetyl-alpha-D-muramoyl-L-alanine + ADP + phosphate + H(+)</text>
        <dbReference type="Rhea" id="RHEA:23372"/>
        <dbReference type="ChEBI" id="CHEBI:15378"/>
        <dbReference type="ChEBI" id="CHEBI:30616"/>
        <dbReference type="ChEBI" id="CHEBI:43474"/>
        <dbReference type="ChEBI" id="CHEBI:57972"/>
        <dbReference type="ChEBI" id="CHEBI:70757"/>
        <dbReference type="ChEBI" id="CHEBI:83898"/>
        <dbReference type="ChEBI" id="CHEBI:456216"/>
        <dbReference type="EC" id="6.3.2.8"/>
    </reaction>
</comment>
<comment type="pathway">
    <text evidence="1">Cell wall biogenesis; peptidoglycan biosynthesis.</text>
</comment>
<comment type="subcellular location">
    <subcellularLocation>
        <location evidence="1">Cytoplasm</location>
    </subcellularLocation>
</comment>
<comment type="similarity">
    <text evidence="1">Belongs to the MurCDEF family.</text>
</comment>
<gene>
    <name evidence="1" type="primary">murC</name>
    <name type="ordered locus">CKL_0143</name>
</gene>
<reference key="1">
    <citation type="journal article" date="2008" name="Proc. Natl. Acad. Sci. U.S.A.">
        <title>The genome of Clostridium kluyveri, a strict anaerobe with unique metabolic features.</title>
        <authorList>
            <person name="Seedorf H."/>
            <person name="Fricke W.F."/>
            <person name="Veith B."/>
            <person name="Brueggemann H."/>
            <person name="Liesegang H."/>
            <person name="Strittmatter A."/>
            <person name="Miethke M."/>
            <person name="Buckel W."/>
            <person name="Hinderberger J."/>
            <person name="Li F."/>
            <person name="Hagemeier C."/>
            <person name="Thauer R.K."/>
            <person name="Gottschalk G."/>
        </authorList>
    </citation>
    <scope>NUCLEOTIDE SEQUENCE [LARGE SCALE GENOMIC DNA]</scope>
    <source>
        <strain>ATCC 8527 / DSM 555 / NBRC 12016 / NCIMB 10680 / K1</strain>
    </source>
</reference>
<keyword id="KW-0067">ATP-binding</keyword>
<keyword id="KW-0131">Cell cycle</keyword>
<keyword id="KW-0132">Cell division</keyword>
<keyword id="KW-0133">Cell shape</keyword>
<keyword id="KW-0961">Cell wall biogenesis/degradation</keyword>
<keyword id="KW-0963">Cytoplasm</keyword>
<keyword id="KW-0436">Ligase</keyword>
<keyword id="KW-0547">Nucleotide-binding</keyword>
<keyword id="KW-0573">Peptidoglycan synthesis</keyword>
<keyword id="KW-1185">Reference proteome</keyword>
<sequence length="457" mass="50876">MSFDFIKNKKVHFIGIGGISMSALAEILLEKGFKVSGSDVKSSEATERLELKGAKVYIGQISQNITSDIDLVVYTAAISKNNEELLKAKDLNIPLMDRAEFLGEIMKGHKYNIAVSGTHGKTTTTSMLSSITLEANLDPTILVGGNLDIIGGNVRIGNSPFFITEACEYKESFLKFFPFIGIILNIDADHLDYYKDIEEIQNAFIKFGKLIPKEGYLVCCADDRRMEKIISNVNCNVMSYGIETGDITAKNICFDKEGRAFFEVYKSDKKLFSLNLSVPGEHNILNALASISVSLILNISVDNIINGLKSFKGTHRRFEIKGQRKGVVVIDDYAHHPTEIKATLNAAKNYPHKRIICVFQPHTFSRTISLFKEFTAAFDNVDELILSDIFPAREKDTGEISSSMLCEQIIKRGVKCRNIKDFDSIVQYLNNILTEGDVLLTIGAGDVFQVGELYLNQ</sequence>
<protein>
    <recommendedName>
        <fullName evidence="1">UDP-N-acetylmuramate--L-alanine ligase</fullName>
        <ecNumber evidence="1">6.3.2.8</ecNumber>
    </recommendedName>
    <alternativeName>
        <fullName evidence="1">UDP-N-acetylmuramoyl-L-alanine synthetase</fullName>
    </alternativeName>
</protein>
<accession>A5N4I2</accession>
<feature type="chain" id="PRO_1000074734" description="UDP-N-acetylmuramate--L-alanine ligase">
    <location>
        <begin position="1"/>
        <end position="457"/>
    </location>
</feature>
<feature type="binding site" evidence="1">
    <location>
        <begin position="117"/>
        <end position="123"/>
    </location>
    <ligand>
        <name>ATP</name>
        <dbReference type="ChEBI" id="CHEBI:30616"/>
    </ligand>
</feature>